<keyword id="KW-0963">Cytoplasm</keyword>
<keyword id="KW-0597">Phosphoprotein</keyword>
<keyword id="KW-1185">Reference proteome</keyword>
<gene>
    <name type="primary">rudhira</name>
    <name type="ORF">CG43154</name>
</gene>
<name>BCAS3_DROME</name>
<evidence type="ECO:0000256" key="1">
    <source>
        <dbReference type="SAM" id="MobiDB-lite"/>
    </source>
</evidence>
<evidence type="ECO:0000269" key="2">
    <source>
    </source>
</evidence>
<evidence type="ECO:0000269" key="3">
    <source>
    </source>
</evidence>
<evidence type="ECO:0000269" key="4">
    <source>
    </source>
</evidence>
<evidence type="ECO:0000269" key="5">
    <source>
    </source>
</evidence>
<evidence type="ECO:0000305" key="6"/>
<evidence type="ECO:0000305" key="7">
    <source>
    </source>
</evidence>
<accession>Q8SY41</accession>
<proteinExistence type="evidence at protein level"/>
<sequence length="1122" mass="117535">MSADSPRRHPSGVVGSGIGLGSGSGTGLGSGSTGGSKSGAAVPAIVPPQTVSDRSILDSAIGFINDVTLANQPVQDPKDTITWARFETCADVSDPRFGDDWELEGNAAPPLLLILGYGLGVQVWAIPANGEAVEVLSWRHGVVTALRVLPTPATAAALDENGRADEPVDSFAEKRPLVAFVDGGSAAASGLLAGSSGLGLGGGGGGVTTVGGSVGGVSGIGVSASAQFSAVNFMSLKTGVQVKTIKFKNAVLDIQANRSAVVITFHERIAVFDARTLEDRLTITTCYPSPGINPNPIALGPRWLAYAEHKLLHSKRSGGGCDGEGVPSYTATVLNAAKSLSKGLREFGEQVAAGLTGTTAGSGASSKSSSFDSASGGPDAKQSGVVTIIDVKHPVKDYSPTSGTPLSSTAGSQGGGDPIVAHFVAHSEALVAMEFDSSGMLLLTADRRGHDFHVFRVQPHPVGPSLAAVHHLYVLHRGDTSAKVQHIAFSLDSRWAAVSTLRGTTHVFPITPYGGAMGVRTHTSLHVVNKLSRFHRSAGLGADGRSSSPISHSESTTFVQSLQPYHNPTLPPYPRPSVVQPLAQLRQPFTLGSPPGSAGLGGGVGGGGVMGSGVSAGGHGVGVGVGSNSQRQRQRLSSLSDDSGKPLSVCSIFAKSRSWLLEPPMATREQPHRVQRKAVDSLFVMAGHGALIQYDLDTKLASHVAKEKICDDTPIELEVEARAQWNLGRRKDGSQEIAPPLGLDNWLIKDRHASLLLDSANQFDDPDERTESWLAQVEIITHAGPHRRLWMGPQFVFKNYNTPSGSNLNHVDAEAVEIGVSKTTTTTLPSTAASSALGLGTIIGKDRSSPLNMPLSAATSVGGAGIGSSAVTGRSGAGVPVLIESGSYSSIEQSPKLMDRFRHGHLDSDYGHGDTRLKEDLADAMRESPSTAAARRETTGNYFTTDQLDGLALNNNNNINNNIIPTKDNASPNPNTNTNPNAIPSSNKVQKAEVTDAVDYPIRHSYGDHGELSTVVNIEVFDDQLSMSSISTNSRLSLEGPPSQSSPPLSLTNGLMDTNLMHFSESVTGTGVAQAQVHGRGANRFEVDDDDEEEEEEEEELDEEAEPDDDEREDRPLGRRNL</sequence>
<comment type="function">
    <text evidence="5">Regulates macropinocytosis in pericardial cells.</text>
</comment>
<comment type="subcellular location">
    <subcellularLocation>
        <location evidence="3">Cytoplasm</location>
    </subcellularLocation>
</comment>
<comment type="tissue specificity">
    <text evidence="3">Expressed in all postembryonic pericardial cells, but not in cardioblasts. Also expressed in Garland cells in third instar larvae (at protein level).</text>
</comment>
<comment type="developmental stage">
    <text evidence="3">Not expressed during embryonic development and first instar larvae. Expression detected from second instar larval stage into adulthood (at protein level).</text>
</comment>
<comment type="domain">
    <text evidence="7">Has been proposed to contain 7 WD repeats. This prediction could not be reproduced.</text>
</comment>
<comment type="disruption phenotype">
    <text evidence="5">RNAi-mediated knockdown of the protein in the hematopoietic system and pericardial cells causes a decrease in macropinocytic uptake by pericardial cells.</text>
</comment>
<comment type="similarity">
    <text evidence="6">Belongs to the BCAS3 family.</text>
</comment>
<feature type="chain" id="PRO_0000372650" description="Breast carcinoma-amplified sequence 3 homolog">
    <location>
        <begin position="1"/>
        <end position="1122"/>
    </location>
</feature>
<feature type="region of interest" description="Disordered" evidence="1">
    <location>
        <begin position="1"/>
        <end position="41"/>
    </location>
</feature>
<feature type="region of interest" description="Disordered" evidence="1">
    <location>
        <begin position="357"/>
        <end position="382"/>
    </location>
</feature>
<feature type="region of interest" description="Disordered" evidence="1">
    <location>
        <begin position="620"/>
        <end position="644"/>
    </location>
</feature>
<feature type="region of interest" description="Disordered" evidence="1">
    <location>
        <begin position="966"/>
        <end position="990"/>
    </location>
</feature>
<feature type="region of interest" description="Disordered" evidence="1">
    <location>
        <begin position="1033"/>
        <end position="1054"/>
    </location>
</feature>
<feature type="region of interest" description="Disordered" evidence="1">
    <location>
        <begin position="1071"/>
        <end position="1122"/>
    </location>
</feature>
<feature type="compositionally biased region" description="Gly residues" evidence="1">
    <location>
        <begin position="14"/>
        <end position="37"/>
    </location>
</feature>
<feature type="compositionally biased region" description="Low complexity" evidence="1">
    <location>
        <begin position="357"/>
        <end position="377"/>
    </location>
</feature>
<feature type="compositionally biased region" description="Low complexity" evidence="1">
    <location>
        <begin position="626"/>
        <end position="641"/>
    </location>
</feature>
<feature type="compositionally biased region" description="Low complexity" evidence="1">
    <location>
        <begin position="966"/>
        <end position="987"/>
    </location>
</feature>
<feature type="compositionally biased region" description="Low complexity" evidence="1">
    <location>
        <begin position="1036"/>
        <end position="1051"/>
    </location>
</feature>
<feature type="compositionally biased region" description="Acidic residues" evidence="1">
    <location>
        <begin position="1087"/>
        <end position="1112"/>
    </location>
</feature>
<feature type="compositionally biased region" description="Basic and acidic residues" evidence="1">
    <location>
        <begin position="1113"/>
        <end position="1122"/>
    </location>
</feature>
<feature type="modified residue" description="Phosphoserine" evidence="2">
    <location>
        <position position="55"/>
    </location>
</feature>
<feature type="modified residue" description="Phosphoserine" evidence="4">
    <location>
        <position position="638"/>
    </location>
</feature>
<organism>
    <name type="scientific">Drosophila melanogaster</name>
    <name type="common">Fruit fly</name>
    <dbReference type="NCBI Taxonomy" id="7227"/>
    <lineage>
        <taxon>Eukaryota</taxon>
        <taxon>Metazoa</taxon>
        <taxon>Ecdysozoa</taxon>
        <taxon>Arthropoda</taxon>
        <taxon>Hexapoda</taxon>
        <taxon>Insecta</taxon>
        <taxon>Pterygota</taxon>
        <taxon>Neoptera</taxon>
        <taxon>Endopterygota</taxon>
        <taxon>Diptera</taxon>
        <taxon>Brachycera</taxon>
        <taxon>Muscomorpha</taxon>
        <taxon>Ephydroidea</taxon>
        <taxon>Drosophilidae</taxon>
        <taxon>Drosophila</taxon>
        <taxon>Sophophora</taxon>
    </lineage>
</organism>
<protein>
    <recommendedName>
        <fullName>Breast carcinoma-amplified sequence 3 homolog</fullName>
    </recommendedName>
    <alternativeName>
        <fullName>Protein rudhira</fullName>
        <shortName>DRudh</shortName>
    </alternativeName>
</protein>
<reference key="1">
    <citation type="journal article" date="2000" name="Science">
        <title>The genome sequence of Drosophila melanogaster.</title>
        <authorList>
            <person name="Adams M.D."/>
            <person name="Celniker S.E."/>
            <person name="Holt R.A."/>
            <person name="Evans C.A."/>
            <person name="Gocayne J.D."/>
            <person name="Amanatides P.G."/>
            <person name="Scherer S.E."/>
            <person name="Li P.W."/>
            <person name="Hoskins R.A."/>
            <person name="Galle R.F."/>
            <person name="George R.A."/>
            <person name="Lewis S.E."/>
            <person name="Richards S."/>
            <person name="Ashburner M."/>
            <person name="Henderson S.N."/>
            <person name="Sutton G.G."/>
            <person name="Wortman J.R."/>
            <person name="Yandell M.D."/>
            <person name="Zhang Q."/>
            <person name="Chen L.X."/>
            <person name="Brandon R.C."/>
            <person name="Rogers Y.-H.C."/>
            <person name="Blazej R.G."/>
            <person name="Champe M."/>
            <person name="Pfeiffer B.D."/>
            <person name="Wan K.H."/>
            <person name="Doyle C."/>
            <person name="Baxter E.G."/>
            <person name="Helt G."/>
            <person name="Nelson C.R."/>
            <person name="Miklos G.L.G."/>
            <person name="Abril J.F."/>
            <person name="Agbayani A."/>
            <person name="An H.-J."/>
            <person name="Andrews-Pfannkoch C."/>
            <person name="Baldwin D."/>
            <person name="Ballew R.M."/>
            <person name="Basu A."/>
            <person name="Baxendale J."/>
            <person name="Bayraktaroglu L."/>
            <person name="Beasley E.M."/>
            <person name="Beeson K.Y."/>
            <person name="Benos P.V."/>
            <person name="Berman B.P."/>
            <person name="Bhandari D."/>
            <person name="Bolshakov S."/>
            <person name="Borkova D."/>
            <person name="Botchan M.R."/>
            <person name="Bouck J."/>
            <person name="Brokstein P."/>
            <person name="Brottier P."/>
            <person name="Burtis K.C."/>
            <person name="Busam D.A."/>
            <person name="Butler H."/>
            <person name="Cadieu E."/>
            <person name="Center A."/>
            <person name="Chandra I."/>
            <person name="Cherry J.M."/>
            <person name="Cawley S."/>
            <person name="Dahlke C."/>
            <person name="Davenport L.B."/>
            <person name="Davies P."/>
            <person name="de Pablos B."/>
            <person name="Delcher A."/>
            <person name="Deng Z."/>
            <person name="Mays A.D."/>
            <person name="Dew I."/>
            <person name="Dietz S.M."/>
            <person name="Dodson K."/>
            <person name="Doup L.E."/>
            <person name="Downes M."/>
            <person name="Dugan-Rocha S."/>
            <person name="Dunkov B.C."/>
            <person name="Dunn P."/>
            <person name="Durbin K.J."/>
            <person name="Evangelista C.C."/>
            <person name="Ferraz C."/>
            <person name="Ferriera S."/>
            <person name="Fleischmann W."/>
            <person name="Fosler C."/>
            <person name="Gabrielian A.E."/>
            <person name="Garg N.S."/>
            <person name="Gelbart W.M."/>
            <person name="Glasser K."/>
            <person name="Glodek A."/>
            <person name="Gong F."/>
            <person name="Gorrell J.H."/>
            <person name="Gu Z."/>
            <person name="Guan P."/>
            <person name="Harris M."/>
            <person name="Harris N.L."/>
            <person name="Harvey D.A."/>
            <person name="Heiman T.J."/>
            <person name="Hernandez J.R."/>
            <person name="Houck J."/>
            <person name="Hostin D."/>
            <person name="Houston K.A."/>
            <person name="Howland T.J."/>
            <person name="Wei M.-H."/>
            <person name="Ibegwam C."/>
            <person name="Jalali M."/>
            <person name="Kalush F."/>
            <person name="Karpen G.H."/>
            <person name="Ke Z."/>
            <person name="Kennison J.A."/>
            <person name="Ketchum K.A."/>
            <person name="Kimmel B.E."/>
            <person name="Kodira C.D."/>
            <person name="Kraft C.L."/>
            <person name="Kravitz S."/>
            <person name="Kulp D."/>
            <person name="Lai Z."/>
            <person name="Lasko P."/>
            <person name="Lei Y."/>
            <person name="Levitsky A.A."/>
            <person name="Li J.H."/>
            <person name="Li Z."/>
            <person name="Liang Y."/>
            <person name="Lin X."/>
            <person name="Liu X."/>
            <person name="Mattei B."/>
            <person name="McIntosh T.C."/>
            <person name="McLeod M.P."/>
            <person name="McPherson D."/>
            <person name="Merkulov G."/>
            <person name="Milshina N.V."/>
            <person name="Mobarry C."/>
            <person name="Morris J."/>
            <person name="Moshrefi A."/>
            <person name="Mount S.M."/>
            <person name="Moy M."/>
            <person name="Murphy B."/>
            <person name="Murphy L."/>
            <person name="Muzny D.M."/>
            <person name="Nelson D.L."/>
            <person name="Nelson D.R."/>
            <person name="Nelson K.A."/>
            <person name="Nixon K."/>
            <person name="Nusskern D.R."/>
            <person name="Pacleb J.M."/>
            <person name="Palazzolo M."/>
            <person name="Pittman G.S."/>
            <person name="Pan S."/>
            <person name="Pollard J."/>
            <person name="Puri V."/>
            <person name="Reese M.G."/>
            <person name="Reinert K."/>
            <person name="Remington K."/>
            <person name="Saunders R.D.C."/>
            <person name="Scheeler F."/>
            <person name="Shen H."/>
            <person name="Shue B.C."/>
            <person name="Siden-Kiamos I."/>
            <person name="Simpson M."/>
            <person name="Skupski M.P."/>
            <person name="Smith T.J."/>
            <person name="Spier E."/>
            <person name="Spradling A.C."/>
            <person name="Stapleton M."/>
            <person name="Strong R."/>
            <person name="Sun E."/>
            <person name="Svirskas R."/>
            <person name="Tector C."/>
            <person name="Turner R."/>
            <person name="Venter E."/>
            <person name="Wang A.H."/>
            <person name="Wang X."/>
            <person name="Wang Z.-Y."/>
            <person name="Wassarman D.A."/>
            <person name="Weinstock G.M."/>
            <person name="Weissenbach J."/>
            <person name="Williams S.M."/>
            <person name="Woodage T."/>
            <person name="Worley K.C."/>
            <person name="Wu D."/>
            <person name="Yang S."/>
            <person name="Yao Q.A."/>
            <person name="Ye J."/>
            <person name="Yeh R.-F."/>
            <person name="Zaveri J.S."/>
            <person name="Zhan M."/>
            <person name="Zhang G."/>
            <person name="Zhao Q."/>
            <person name="Zheng L."/>
            <person name="Zheng X.H."/>
            <person name="Zhong F.N."/>
            <person name="Zhong W."/>
            <person name="Zhou X."/>
            <person name="Zhu S.C."/>
            <person name="Zhu X."/>
            <person name="Smith H.O."/>
            <person name="Gibbs R.A."/>
            <person name="Myers E.W."/>
            <person name="Rubin G.M."/>
            <person name="Venter J.C."/>
        </authorList>
    </citation>
    <scope>NUCLEOTIDE SEQUENCE [LARGE SCALE GENOMIC DNA]</scope>
    <source>
        <strain>Berkeley</strain>
    </source>
</reference>
<reference key="2">
    <citation type="journal article" date="2002" name="Genome Biol.">
        <title>Annotation of the Drosophila melanogaster euchromatic genome: a systematic review.</title>
        <authorList>
            <person name="Misra S."/>
            <person name="Crosby M.A."/>
            <person name="Mungall C.J."/>
            <person name="Matthews B.B."/>
            <person name="Campbell K.S."/>
            <person name="Hradecky P."/>
            <person name="Huang Y."/>
            <person name="Kaminker J.S."/>
            <person name="Millburn G.H."/>
            <person name="Prochnik S.E."/>
            <person name="Smith C.D."/>
            <person name="Tupy J.L."/>
            <person name="Whitfield E.J."/>
            <person name="Bayraktaroglu L."/>
            <person name="Berman B.P."/>
            <person name="Bettencourt B.R."/>
            <person name="Celniker S.E."/>
            <person name="de Grey A.D.N.J."/>
            <person name="Drysdale R.A."/>
            <person name="Harris N.L."/>
            <person name="Richter J."/>
            <person name="Russo S."/>
            <person name="Schroeder A.J."/>
            <person name="Shu S.Q."/>
            <person name="Stapleton M."/>
            <person name="Yamada C."/>
            <person name="Ashburner M."/>
            <person name="Gelbart W.M."/>
            <person name="Rubin G.M."/>
            <person name="Lewis S.E."/>
        </authorList>
    </citation>
    <scope>GENOME REANNOTATION</scope>
    <source>
        <strain>Berkeley</strain>
    </source>
</reference>
<reference key="3">
    <citation type="journal article" date="2002" name="Genome Biol.">
        <title>A Drosophila full-length cDNA resource.</title>
        <authorList>
            <person name="Stapleton M."/>
            <person name="Carlson J.W."/>
            <person name="Brokstein P."/>
            <person name="Yu C."/>
            <person name="Champe M."/>
            <person name="George R.A."/>
            <person name="Guarin H."/>
            <person name="Kronmiller B."/>
            <person name="Pacleb J.M."/>
            <person name="Park S."/>
            <person name="Wan K.H."/>
            <person name="Rubin G.M."/>
            <person name="Celniker S.E."/>
        </authorList>
    </citation>
    <scope>NUCLEOTIDE SEQUENCE [LARGE SCALE MRNA]</scope>
    <source>
        <strain>Berkeley</strain>
        <tissue>Embryo</tissue>
    </source>
</reference>
<reference key="4">
    <citation type="journal article" date="2006" name="Gene Expr. Patterns">
        <title>Rudhira is a cytoplasmic WD40 protein expressed in mouse embryonic stem cells and during embryonic erythropoiesis.</title>
        <authorList>
            <person name="Siva K."/>
            <person name="Inamdar M.S."/>
        </authorList>
    </citation>
    <scope>DOMAIN</scope>
</reference>
<reference key="5">
    <citation type="journal article" date="2007" name="Mol. Biosyst.">
        <title>An integrated chemical, mass spectrometric and computational strategy for (quantitative) phosphoproteomics: application to Drosophila melanogaster Kc167 cells.</title>
        <authorList>
            <person name="Bodenmiller B."/>
            <person name="Mueller L.N."/>
            <person name="Pedrioli P.G.A."/>
            <person name="Pflieger D."/>
            <person name="Juenger M.A."/>
            <person name="Eng J.K."/>
            <person name="Aebersold R."/>
            <person name="Tao W.A."/>
        </authorList>
    </citation>
    <scope>PHOSPHORYLATION [LARGE SCALE ANALYSIS] AT SER-55</scope>
    <scope>IDENTIFICATION BY MASS SPECTROMETRY</scope>
</reference>
<reference key="6">
    <citation type="journal article" date="2008" name="Exp. Cell Res.">
        <title>Macromolecular uptake in Drosophila pericardial cells requires rudhira function.</title>
        <authorList>
            <person name="Das D."/>
            <person name="Aradhya R."/>
            <person name="Ashoka D."/>
            <person name="Inamdar M."/>
        </authorList>
    </citation>
    <scope>FUNCTION</scope>
    <scope>DISRUPTION PHENOTYPE</scope>
</reference>
<reference key="7">
    <citation type="journal article" date="2008" name="Gene Expr. Patterns">
        <title>Gene expression analysis in post-embryonic pericardial cells of Drosophila.</title>
        <authorList>
            <person name="Das D."/>
            <person name="Ashoka D."/>
            <person name="Aradhya R."/>
            <person name="Inamdar M."/>
        </authorList>
    </citation>
    <scope>SUBCELLULAR LOCATION</scope>
    <scope>TISSUE SPECIFICITY</scope>
    <scope>DEVELOPMENTAL STAGE</scope>
</reference>
<reference key="8">
    <citation type="journal article" date="2008" name="J. Proteome Res.">
        <title>Phosphoproteome analysis of Drosophila melanogaster embryos.</title>
        <authorList>
            <person name="Zhai B."/>
            <person name="Villen J."/>
            <person name="Beausoleil S.A."/>
            <person name="Mintseris J."/>
            <person name="Gygi S.P."/>
        </authorList>
    </citation>
    <scope>PHOSPHORYLATION [LARGE SCALE ANALYSIS] AT SER-638</scope>
    <scope>IDENTIFICATION BY MASS SPECTROMETRY</scope>
    <source>
        <tissue>Embryo</tissue>
    </source>
</reference>
<dbReference type="EMBL" id="AE014298">
    <property type="protein sequence ID" value="AAN09302.1"/>
    <property type="molecule type" value="Genomic_DNA"/>
</dbReference>
<dbReference type="EMBL" id="AY075392">
    <property type="protein sequence ID" value="AAL68226.1"/>
    <property type="molecule type" value="mRNA"/>
</dbReference>
<dbReference type="RefSeq" id="NP_001245631.1">
    <property type="nucleotide sequence ID" value="NM_001258702.1"/>
</dbReference>
<dbReference type="RefSeq" id="NP_001259463.1">
    <property type="nucleotide sequence ID" value="NM_001272534.1"/>
</dbReference>
<dbReference type="RefSeq" id="NP_727567.1">
    <property type="nucleotide sequence ID" value="NM_167309.3"/>
</dbReference>
<dbReference type="BioGRID" id="58541">
    <property type="interactions" value="2"/>
</dbReference>
<dbReference type="FunCoup" id="Q8SY41">
    <property type="interactions" value="1046"/>
</dbReference>
<dbReference type="IntAct" id="Q8SY41">
    <property type="interactions" value="3"/>
</dbReference>
<dbReference type="STRING" id="7227.FBpp0294057"/>
<dbReference type="GlyGen" id="Q8SY41">
    <property type="glycosylation" value="1 site"/>
</dbReference>
<dbReference type="iPTMnet" id="Q8SY41"/>
<dbReference type="PaxDb" id="7227-FBpp0294057"/>
<dbReference type="EnsemblMetazoa" id="FBtr0305603">
    <property type="protein sequence ID" value="FBpp0294054"/>
    <property type="gene ID" value="FBgn0266019"/>
</dbReference>
<dbReference type="EnsemblMetazoa" id="FBtr0305605">
    <property type="protein sequence ID" value="FBpp0294056"/>
    <property type="gene ID" value="FBgn0266019"/>
</dbReference>
<dbReference type="EnsemblMetazoa" id="FBtr0333015">
    <property type="protein sequence ID" value="FBpp0305229"/>
    <property type="gene ID" value="FBgn0266019"/>
</dbReference>
<dbReference type="GeneID" id="32136"/>
<dbReference type="KEGG" id="dme:Dmel_CG43154"/>
<dbReference type="UCSC" id="CG32663-RA">
    <property type="organism name" value="d. melanogaster"/>
</dbReference>
<dbReference type="AGR" id="FB:FBgn0266019"/>
<dbReference type="CTD" id="32136"/>
<dbReference type="FlyBase" id="FBgn0266019">
    <property type="gene designation" value="rudhira"/>
</dbReference>
<dbReference type="VEuPathDB" id="VectorBase:FBgn0266019"/>
<dbReference type="eggNOG" id="KOG2109">
    <property type="taxonomic scope" value="Eukaryota"/>
</dbReference>
<dbReference type="eggNOG" id="KOG4415">
    <property type="taxonomic scope" value="Eukaryota"/>
</dbReference>
<dbReference type="GeneTree" id="ENSGT00390000006454"/>
<dbReference type="HOGENOM" id="CLU_008458_1_0_1"/>
<dbReference type="InParanoid" id="Q8SY41"/>
<dbReference type="OrthoDB" id="25778at2759"/>
<dbReference type="PhylomeDB" id="Q8SY41"/>
<dbReference type="BioGRID-ORCS" id="32136">
    <property type="hits" value="0 hits in 1 CRISPR screen"/>
</dbReference>
<dbReference type="GenomeRNAi" id="32136"/>
<dbReference type="PRO" id="PR:Q8SY41"/>
<dbReference type="Proteomes" id="UP000000803">
    <property type="component" value="Chromosome X"/>
</dbReference>
<dbReference type="Bgee" id="FBgn0266019">
    <property type="expression patterns" value="Expressed in hemocyte (sensu Nematoda and Protostomia) in body wall and 282 other cell types or tissues"/>
</dbReference>
<dbReference type="ExpressionAtlas" id="Q8SY41">
    <property type="expression patterns" value="baseline and differential"/>
</dbReference>
<dbReference type="GO" id="GO:0005737">
    <property type="term" value="C:cytoplasm"/>
    <property type="evidence" value="ECO:0000314"/>
    <property type="project" value="FlyBase"/>
</dbReference>
<dbReference type="GO" id="GO:0005829">
    <property type="term" value="C:cytosol"/>
    <property type="evidence" value="ECO:0007005"/>
    <property type="project" value="FlyBase"/>
</dbReference>
<dbReference type="GO" id="GO:0006914">
    <property type="term" value="P:autophagy"/>
    <property type="evidence" value="ECO:0007669"/>
    <property type="project" value="InterPro"/>
</dbReference>
<dbReference type="GO" id="GO:0044351">
    <property type="term" value="P:macropinocytosis"/>
    <property type="evidence" value="ECO:0000315"/>
    <property type="project" value="FlyBase"/>
</dbReference>
<dbReference type="GO" id="GO:0042594">
    <property type="term" value="P:response to starvation"/>
    <property type="evidence" value="ECO:0000318"/>
    <property type="project" value="GO_Central"/>
</dbReference>
<dbReference type="InterPro" id="IPR045142">
    <property type="entry name" value="BCAS3-like"/>
</dbReference>
<dbReference type="InterPro" id="IPR022175">
    <property type="entry name" value="BCAS3_dom"/>
</dbReference>
<dbReference type="InterPro" id="IPR048382">
    <property type="entry name" value="BCAS3_WD40"/>
</dbReference>
<dbReference type="PANTHER" id="PTHR13268:SF0">
    <property type="entry name" value="BCAS3 MICROTUBULE ASSOCIATED CELL MIGRATION FACTOR"/>
    <property type="match status" value="1"/>
</dbReference>
<dbReference type="PANTHER" id="PTHR13268">
    <property type="entry name" value="BREAST CARCINOMA AMPLIFIED SEQUENCE 3"/>
    <property type="match status" value="1"/>
</dbReference>
<dbReference type="Pfam" id="PF12490">
    <property type="entry name" value="BCAS3"/>
    <property type="match status" value="1"/>
</dbReference>
<dbReference type="Pfam" id="PF21034">
    <property type="entry name" value="BCAS3_WD40"/>
    <property type="match status" value="2"/>
</dbReference>
<dbReference type="SUPFAM" id="SSF69322">
    <property type="entry name" value="Tricorn protease domain 2"/>
    <property type="match status" value="1"/>
</dbReference>